<evidence type="ECO:0000250" key="1"/>
<evidence type="ECO:0000305" key="2"/>
<feature type="chain" id="PRO_0000428538" description="Putative S-adenosyl-L-methionine-dependent methyltransferase MT3874">
    <location>
        <begin position="1"/>
        <end position="314"/>
    </location>
</feature>
<feature type="binding site" evidence="1">
    <location>
        <position position="132"/>
    </location>
    <ligand>
        <name>S-adenosyl-L-methionine</name>
        <dbReference type="ChEBI" id="CHEBI:59789"/>
    </ligand>
</feature>
<feature type="binding site" evidence="1">
    <location>
        <begin position="161"/>
        <end position="162"/>
    </location>
    <ligand>
        <name>S-adenosyl-L-methionine</name>
        <dbReference type="ChEBI" id="CHEBI:59789"/>
    </ligand>
</feature>
<accession>P9WFH4</accession>
<accession>L0TDR0</accession>
<accession>O86359</accession>
<accession>Q7D4W6</accession>
<dbReference type="EC" id="2.1.1.-"/>
<dbReference type="EMBL" id="AE000516">
    <property type="protein sequence ID" value="AAK48238.1"/>
    <property type="molecule type" value="Genomic_DNA"/>
</dbReference>
<dbReference type="PIR" id="H70801">
    <property type="entry name" value="H70801"/>
</dbReference>
<dbReference type="RefSeq" id="WP_003420557.1">
    <property type="nucleotide sequence ID" value="NZ_KK341227.1"/>
</dbReference>
<dbReference type="SMR" id="P9WFH4"/>
<dbReference type="KEGG" id="mtc:MT3874"/>
<dbReference type="PATRIC" id="fig|83331.31.peg.4169"/>
<dbReference type="HOGENOM" id="CLU_056160_2_1_11"/>
<dbReference type="Proteomes" id="UP000001020">
    <property type="component" value="Chromosome"/>
</dbReference>
<dbReference type="GO" id="GO:0008168">
    <property type="term" value="F:methyltransferase activity"/>
    <property type="evidence" value="ECO:0007669"/>
    <property type="project" value="UniProtKB-KW"/>
</dbReference>
<dbReference type="GO" id="GO:0032259">
    <property type="term" value="P:methylation"/>
    <property type="evidence" value="ECO:0007669"/>
    <property type="project" value="UniProtKB-KW"/>
</dbReference>
<dbReference type="FunFam" id="3.40.50.150:FF:000152">
    <property type="entry name" value="S-adenosyl-L-methionine-dependent methyltransferase"/>
    <property type="match status" value="1"/>
</dbReference>
<dbReference type="Gene3D" id="3.40.50.150">
    <property type="entry name" value="Vaccinia Virus protein VP39"/>
    <property type="match status" value="1"/>
</dbReference>
<dbReference type="InterPro" id="IPR007213">
    <property type="entry name" value="Ppm1/Ppm2/Tcmp"/>
</dbReference>
<dbReference type="InterPro" id="IPR029063">
    <property type="entry name" value="SAM-dependent_MTases_sf"/>
</dbReference>
<dbReference type="InterPro" id="IPR011610">
    <property type="entry name" value="SAM_mthyl_Trfase_ML2640-like"/>
</dbReference>
<dbReference type="NCBIfam" id="TIGR00027">
    <property type="entry name" value="mthyl_TIGR00027"/>
    <property type="match status" value="1"/>
</dbReference>
<dbReference type="PANTHER" id="PTHR43619">
    <property type="entry name" value="S-ADENOSYL-L-METHIONINE-DEPENDENT METHYLTRANSFERASE YKTD-RELATED"/>
    <property type="match status" value="1"/>
</dbReference>
<dbReference type="PANTHER" id="PTHR43619:SF2">
    <property type="entry name" value="S-ADENOSYL-L-METHIONINE-DEPENDENT METHYLTRANSFERASES SUPERFAMILY PROTEIN"/>
    <property type="match status" value="1"/>
</dbReference>
<dbReference type="Pfam" id="PF04072">
    <property type="entry name" value="LCM"/>
    <property type="match status" value="1"/>
</dbReference>
<dbReference type="SUPFAM" id="SSF53335">
    <property type="entry name" value="S-adenosyl-L-methionine-dependent methyltransferases"/>
    <property type="match status" value="1"/>
</dbReference>
<keyword id="KW-0489">Methyltransferase</keyword>
<keyword id="KW-1185">Reference proteome</keyword>
<keyword id="KW-0949">S-adenosyl-L-methionine</keyword>
<keyword id="KW-0808">Transferase</keyword>
<comment type="function">
    <text evidence="1">Exhibits S-adenosyl-L-methionine-dependent methyltransferase activity.</text>
</comment>
<comment type="similarity">
    <text evidence="2">Belongs to the UPF0677 family.</text>
</comment>
<proteinExistence type="inferred from homology"/>
<name>Y3874_MYCTO</name>
<organism>
    <name type="scientific">Mycobacterium tuberculosis (strain CDC 1551 / Oshkosh)</name>
    <dbReference type="NCBI Taxonomy" id="83331"/>
    <lineage>
        <taxon>Bacteria</taxon>
        <taxon>Bacillati</taxon>
        <taxon>Actinomycetota</taxon>
        <taxon>Actinomycetes</taxon>
        <taxon>Mycobacteriales</taxon>
        <taxon>Mycobacteriaceae</taxon>
        <taxon>Mycobacterium</taxon>
        <taxon>Mycobacterium tuberculosis complex</taxon>
    </lineage>
</organism>
<protein>
    <recommendedName>
        <fullName>Putative S-adenosyl-L-methionine-dependent methyltransferase MT3874</fullName>
        <ecNumber>2.1.1.-</ecNumber>
    </recommendedName>
</protein>
<sequence>MPRTDNDSWAITESVGATALGVAAARAAETESDNPLINDPFARIFVDAAGDGIWSMYTNRTLLAGATDLDPDLRAPIQQMIDFMAARTAFFDEYFLATADAGVRQVVILASGLDSRAWRLPWPDGTVVYELDQPKVLEFKSATLRQHGAQPASQLVNVPIDLRQDWPKALQKAGFDPSKPCAWLAEGLVRYLPARAQDLLFERIDALSRPGSWLASNVPGAGFLDPERMRRQRADMRRMRAAAAKLVETEISDVDDLWYAEQRTAVAEWLRERGWDVSTATLPELLARYGRSIPHSGEDSIPPNLFVSAQRATS</sequence>
<reference key="1">
    <citation type="journal article" date="2002" name="J. Bacteriol.">
        <title>Whole-genome comparison of Mycobacterium tuberculosis clinical and laboratory strains.</title>
        <authorList>
            <person name="Fleischmann R.D."/>
            <person name="Alland D."/>
            <person name="Eisen J.A."/>
            <person name="Carpenter L."/>
            <person name="White O."/>
            <person name="Peterson J.D."/>
            <person name="DeBoy R.T."/>
            <person name="Dodson R.J."/>
            <person name="Gwinn M.L."/>
            <person name="Haft D.H."/>
            <person name="Hickey E.K."/>
            <person name="Kolonay J.F."/>
            <person name="Nelson W.C."/>
            <person name="Umayam L.A."/>
            <person name="Ermolaeva M.D."/>
            <person name="Salzberg S.L."/>
            <person name="Delcher A."/>
            <person name="Utterback T.R."/>
            <person name="Weidman J.F."/>
            <person name="Khouri H.M."/>
            <person name="Gill J."/>
            <person name="Mikula A."/>
            <person name="Bishai W."/>
            <person name="Jacobs W.R. Jr."/>
            <person name="Venter J.C."/>
            <person name="Fraser C.M."/>
        </authorList>
    </citation>
    <scope>NUCLEOTIDE SEQUENCE [LARGE SCALE GENOMIC DNA]</scope>
    <source>
        <strain>CDC 1551 / Oshkosh</strain>
    </source>
</reference>
<gene>
    <name type="ordered locus">MT3874</name>
</gene>